<reference key="1">
    <citation type="submission" date="1998-11" db="EMBL/GenBank/DDBJ databases">
        <title>Candida albicans strain 1161 genome pilot sequencing project.</title>
        <authorList>
            <person name="Oliver K."/>
            <person name="Harris D."/>
            <person name="Barrell B.G."/>
            <person name="Rajandream M.A."/>
        </authorList>
    </citation>
    <scope>NUCLEOTIDE SEQUENCE [LARGE SCALE GENOMIC DNA]</scope>
    <source>
        <strain>1161</strain>
    </source>
</reference>
<reference key="2">
    <citation type="journal article" date="2004" name="Proc. Natl. Acad. Sci. U.S.A.">
        <title>The diploid genome sequence of Candida albicans.</title>
        <authorList>
            <person name="Jones T."/>
            <person name="Federspiel N.A."/>
            <person name="Chibana H."/>
            <person name="Dungan J."/>
            <person name="Kalman S."/>
            <person name="Magee B.B."/>
            <person name="Newport G."/>
            <person name="Thorstenson Y.R."/>
            <person name="Agabian N."/>
            <person name="Magee P.T."/>
            <person name="Davis R.W."/>
            <person name="Scherer S."/>
        </authorList>
    </citation>
    <scope>NUCLEOTIDE SEQUENCE [LARGE SCALE GENOMIC DNA]</scope>
    <source>
        <strain>SC5314 / ATCC MYA-2876</strain>
    </source>
</reference>
<reference key="3">
    <citation type="journal article" date="2007" name="Genome Biol.">
        <title>Assembly of the Candida albicans genome into sixteen supercontigs aligned on the eight chromosomes.</title>
        <authorList>
            <person name="van het Hoog M."/>
            <person name="Rast T.J."/>
            <person name="Martchenko M."/>
            <person name="Grindle S."/>
            <person name="Dignard D."/>
            <person name="Hogues H."/>
            <person name="Cuomo C."/>
            <person name="Berriman M."/>
            <person name="Scherer S."/>
            <person name="Magee B.B."/>
            <person name="Whiteway M."/>
            <person name="Chibana H."/>
            <person name="Nantel A."/>
            <person name="Magee P.T."/>
        </authorList>
    </citation>
    <scope>GENOME REANNOTATION</scope>
    <source>
        <strain>SC5314 / ATCC MYA-2876</strain>
    </source>
</reference>
<reference key="4">
    <citation type="journal article" date="2013" name="Genome Biol.">
        <title>Assembly of a phased diploid Candida albicans genome facilitates allele-specific measurements and provides a simple model for repeat and indel structure.</title>
        <authorList>
            <person name="Muzzey D."/>
            <person name="Schwartz K."/>
            <person name="Weissman J.S."/>
            <person name="Sherlock G."/>
        </authorList>
    </citation>
    <scope>NUCLEOTIDE SEQUENCE [LARGE SCALE GENOMIC DNA]</scope>
    <scope>GENOME REANNOTATION</scope>
    <source>
        <strain>SC5314 / ATCC MYA-2876</strain>
    </source>
</reference>
<accession>Q5A4N5</accession>
<accession>A0A1D8PPP7</accession>
<accession>O94001</accession>
<proteinExistence type="inferred from homology"/>
<organism>
    <name type="scientific">Candida albicans (strain SC5314 / ATCC MYA-2876)</name>
    <name type="common">Yeast</name>
    <dbReference type="NCBI Taxonomy" id="237561"/>
    <lineage>
        <taxon>Eukaryota</taxon>
        <taxon>Fungi</taxon>
        <taxon>Dikarya</taxon>
        <taxon>Ascomycota</taxon>
        <taxon>Saccharomycotina</taxon>
        <taxon>Pichiomycetes</taxon>
        <taxon>Debaryomycetaceae</taxon>
        <taxon>Candida/Lodderomyces clade</taxon>
        <taxon>Candida</taxon>
    </lineage>
</organism>
<sequence length="378" mass="42482">MNLKDITDPSDFKTTKLPALAELDILKRCYICKDLLNAPVRTQCDHTYCSQCIREFLLRDNRCPLCKTEVFESGLKRDPLLEEIVISYASLRPHLLRLLEIEKVESKQEVDREKSANESASNGNRNVNNDVDETVRVKDQSNADELGEEKGQAQHGEQVNEQTTEVISLLSDDEENGSDSLVKCPICFERMELDVLQGKHIDDCLSGKSTKRTPTDILSPKAKRPKQITSFFKPTIDTKTPSPPTSKASTTPTATPTTTLLKANVSSPSPVAQSTVHKGKPLPKLDFSSLSTQKIKAKLSDLKLPTTGSRNEMEARYLHYYVIYNANLDSNHPVKESILRQQLKQWEMVQHQPSFGDAEWKGAETGNWKELIARARSN</sequence>
<comment type="function">
    <text evidence="1">E3 RING-finger protein, member of the UBC2/RAD6 epistasis group. Associates to the E2 ubiquitin conjugating enzyme UBC2/RAD6 to form the UBC2-RAD18 ubiquitin ligase complex involved in postreplicative repair (PRR) of damaged DNA.</text>
</comment>
<comment type="catalytic activity">
    <reaction>
        <text>S-ubiquitinyl-[E2 ubiquitin-conjugating enzyme]-L-cysteine + [acceptor protein]-L-lysine = [E2 ubiquitin-conjugating enzyme]-L-cysteine + N(6)-ubiquitinyl-[acceptor protein]-L-lysine.</text>
        <dbReference type="EC" id="2.3.2.27"/>
    </reaction>
</comment>
<comment type="pathway">
    <text>Protein modification; protein ubiquitination.</text>
</comment>
<comment type="subunit">
    <text evidence="1">Interacts with E2 UBC2, forming a complex with ubiquitin ligase activity.</text>
</comment>
<comment type="subcellular location">
    <subcellularLocation>
        <location evidence="1">Nucleus</location>
    </subcellularLocation>
</comment>
<comment type="similarity">
    <text evidence="6">Belongs to the RAD18 family.</text>
</comment>
<dbReference type="EC" id="2.3.2.27"/>
<dbReference type="EMBL" id="AL033391">
    <property type="protein sequence ID" value="CAA21935.1"/>
    <property type="molecule type" value="Genomic_DNA"/>
</dbReference>
<dbReference type="EMBL" id="CP017628">
    <property type="protein sequence ID" value="AOW30114.1"/>
    <property type="molecule type" value="Genomic_DNA"/>
</dbReference>
<dbReference type="RefSeq" id="XP_716717.2">
    <property type="nucleotide sequence ID" value="XM_711624.2"/>
</dbReference>
<dbReference type="SMR" id="Q5A4N5"/>
<dbReference type="BioGRID" id="1224731">
    <property type="interactions" value="1"/>
</dbReference>
<dbReference type="FunCoup" id="Q5A4N5">
    <property type="interactions" value="319"/>
</dbReference>
<dbReference type="STRING" id="237561.Q5A4N5"/>
<dbReference type="EnsemblFungi" id="C6_01770W_A-T">
    <property type="protein sequence ID" value="C6_01770W_A-T-p1"/>
    <property type="gene ID" value="C6_01770W_A"/>
</dbReference>
<dbReference type="GeneID" id="3641637"/>
<dbReference type="KEGG" id="cal:CAALFM_C601770WA"/>
<dbReference type="CGD" id="CAL0000182971">
    <property type="gene designation" value="RAD18"/>
</dbReference>
<dbReference type="VEuPathDB" id="FungiDB:C6_01770W_A"/>
<dbReference type="HOGENOM" id="CLU_028491_2_0_1"/>
<dbReference type="InParanoid" id="Q5A4N5"/>
<dbReference type="OrthoDB" id="9049620at2759"/>
<dbReference type="UniPathway" id="UPA00143"/>
<dbReference type="PRO" id="PR:Q5A4N5"/>
<dbReference type="Proteomes" id="UP000000559">
    <property type="component" value="Chromosome 6"/>
</dbReference>
<dbReference type="GO" id="GO:0005634">
    <property type="term" value="C:nucleus"/>
    <property type="evidence" value="ECO:0000318"/>
    <property type="project" value="GO_Central"/>
</dbReference>
<dbReference type="GO" id="GO:0097505">
    <property type="term" value="C:Rad6-Rad18 complex"/>
    <property type="evidence" value="ECO:0000318"/>
    <property type="project" value="GO_Central"/>
</dbReference>
<dbReference type="GO" id="GO:0003697">
    <property type="term" value="F:single-stranded DNA binding"/>
    <property type="evidence" value="ECO:0007669"/>
    <property type="project" value="InterPro"/>
</dbReference>
<dbReference type="GO" id="GO:0061630">
    <property type="term" value="F:ubiquitin protein ligase activity"/>
    <property type="evidence" value="ECO:0007669"/>
    <property type="project" value="InterPro"/>
</dbReference>
<dbReference type="GO" id="GO:0008270">
    <property type="term" value="F:zinc ion binding"/>
    <property type="evidence" value="ECO:0007669"/>
    <property type="project" value="UniProtKB-KW"/>
</dbReference>
<dbReference type="GO" id="GO:0006974">
    <property type="term" value="P:DNA damage response"/>
    <property type="evidence" value="ECO:0000315"/>
    <property type="project" value="CGD"/>
</dbReference>
<dbReference type="GO" id="GO:0006301">
    <property type="term" value="P:postreplication repair"/>
    <property type="evidence" value="ECO:0000318"/>
    <property type="project" value="GO_Central"/>
</dbReference>
<dbReference type="GO" id="GO:0006513">
    <property type="term" value="P:protein monoubiquitination"/>
    <property type="evidence" value="ECO:0000318"/>
    <property type="project" value="GO_Central"/>
</dbReference>
<dbReference type="CDD" id="cd23148">
    <property type="entry name" value="RING-HC_ScRAD18-like"/>
    <property type="match status" value="1"/>
</dbReference>
<dbReference type="FunFam" id="3.30.40.10:FF:000172">
    <property type="entry name" value="E3 ubiquitin-protein ligase RAD18"/>
    <property type="match status" value="1"/>
</dbReference>
<dbReference type="Gene3D" id="3.30.160.60">
    <property type="entry name" value="Classic Zinc Finger"/>
    <property type="match status" value="1"/>
</dbReference>
<dbReference type="Gene3D" id="3.30.40.10">
    <property type="entry name" value="Zinc/RING finger domain, C3HC4 (zinc finger)"/>
    <property type="match status" value="1"/>
</dbReference>
<dbReference type="InterPro" id="IPR039577">
    <property type="entry name" value="Rad18"/>
</dbReference>
<dbReference type="InterPro" id="IPR004580">
    <property type="entry name" value="Rad18_fungi"/>
</dbReference>
<dbReference type="InterPro" id="IPR006642">
    <property type="entry name" value="Rad18_UBZ4"/>
</dbReference>
<dbReference type="InterPro" id="IPR003034">
    <property type="entry name" value="SAP_dom"/>
</dbReference>
<dbReference type="InterPro" id="IPR001841">
    <property type="entry name" value="Znf_RING"/>
</dbReference>
<dbReference type="InterPro" id="IPR013083">
    <property type="entry name" value="Znf_RING/FYVE/PHD"/>
</dbReference>
<dbReference type="InterPro" id="IPR017907">
    <property type="entry name" value="Znf_RING_CS"/>
</dbReference>
<dbReference type="NCBIfam" id="TIGR00599">
    <property type="entry name" value="rad18"/>
    <property type="match status" value="1"/>
</dbReference>
<dbReference type="PANTHER" id="PTHR14134">
    <property type="entry name" value="E3 UBIQUITIN-PROTEIN LIGASE RAD18"/>
    <property type="match status" value="1"/>
</dbReference>
<dbReference type="PANTHER" id="PTHR14134:SF2">
    <property type="entry name" value="E3 UBIQUITIN-PROTEIN LIGASE RAD18"/>
    <property type="match status" value="1"/>
</dbReference>
<dbReference type="Pfam" id="PF02037">
    <property type="entry name" value="SAP"/>
    <property type="match status" value="1"/>
</dbReference>
<dbReference type="Pfam" id="PF13923">
    <property type="entry name" value="zf-C3HC4_2"/>
    <property type="match status" value="1"/>
</dbReference>
<dbReference type="SMART" id="SM00184">
    <property type="entry name" value="RING"/>
    <property type="match status" value="1"/>
</dbReference>
<dbReference type="SMART" id="SM00513">
    <property type="entry name" value="SAP"/>
    <property type="match status" value="1"/>
</dbReference>
<dbReference type="SMART" id="SM00734">
    <property type="entry name" value="ZnF_Rad18"/>
    <property type="match status" value="1"/>
</dbReference>
<dbReference type="SUPFAM" id="SSF57850">
    <property type="entry name" value="RING/U-box"/>
    <property type="match status" value="1"/>
</dbReference>
<dbReference type="PROSITE" id="PS50800">
    <property type="entry name" value="SAP"/>
    <property type="match status" value="1"/>
</dbReference>
<dbReference type="PROSITE" id="PS00518">
    <property type="entry name" value="ZF_RING_1"/>
    <property type="match status" value="1"/>
</dbReference>
<dbReference type="PROSITE" id="PS50089">
    <property type="entry name" value="ZF_RING_2"/>
    <property type="match status" value="1"/>
</dbReference>
<dbReference type="PROSITE" id="PS51908">
    <property type="entry name" value="ZF_UBZ4"/>
    <property type="match status" value="1"/>
</dbReference>
<evidence type="ECO:0000250" key="1"/>
<evidence type="ECO:0000255" key="2">
    <source>
        <dbReference type="PROSITE-ProRule" id="PRU00175"/>
    </source>
</evidence>
<evidence type="ECO:0000255" key="3">
    <source>
        <dbReference type="PROSITE-ProRule" id="PRU00186"/>
    </source>
</evidence>
<evidence type="ECO:0000255" key="4">
    <source>
        <dbReference type="PROSITE-ProRule" id="PRU01256"/>
    </source>
</evidence>
<evidence type="ECO:0000256" key="5">
    <source>
        <dbReference type="SAM" id="MobiDB-lite"/>
    </source>
</evidence>
<evidence type="ECO:0000305" key="6"/>
<name>RAD18_CANAL</name>
<gene>
    <name type="primary">RAD18</name>
    <name type="ordered locus">CAALFM_C601770WA</name>
    <name type="ORF">Ca20C1.14c</name>
    <name type="ORF">CaO19.10910</name>
    <name type="ORF">CaO19.3407</name>
</gene>
<feature type="chain" id="PRO_0000056153" description="Postreplication repair E3 ubiquitin-protein ligase RAD18">
    <location>
        <begin position="1"/>
        <end position="378"/>
    </location>
</feature>
<feature type="domain" description="SAP" evidence="3">
    <location>
        <begin position="287"/>
        <end position="321"/>
    </location>
</feature>
<feature type="zinc finger region" description="RING-type" evidence="2">
    <location>
        <begin position="29"/>
        <end position="67"/>
    </location>
</feature>
<feature type="zinc finger region" description="UBZ4-type" evidence="4">
    <location>
        <begin position="181"/>
        <end position="209"/>
    </location>
</feature>
<feature type="region of interest" description="Disordered" evidence="5">
    <location>
        <begin position="109"/>
        <end position="162"/>
    </location>
</feature>
<feature type="region of interest" description="Disordered" evidence="5">
    <location>
        <begin position="233"/>
        <end position="256"/>
    </location>
</feature>
<feature type="compositionally biased region" description="Polar residues" evidence="5">
    <location>
        <begin position="117"/>
        <end position="129"/>
    </location>
</feature>
<feature type="compositionally biased region" description="Low complexity" evidence="5">
    <location>
        <begin position="245"/>
        <end position="256"/>
    </location>
</feature>
<feature type="binding site" evidence="4">
    <location>
        <position position="184"/>
    </location>
    <ligand>
        <name>Zn(2+)</name>
        <dbReference type="ChEBI" id="CHEBI:29105"/>
    </ligand>
</feature>
<feature type="binding site" evidence="4">
    <location>
        <position position="187"/>
    </location>
    <ligand>
        <name>Zn(2+)</name>
        <dbReference type="ChEBI" id="CHEBI:29105"/>
    </ligand>
</feature>
<feature type="binding site" evidence="4">
    <location>
        <position position="200"/>
    </location>
    <ligand>
        <name>Zn(2+)</name>
        <dbReference type="ChEBI" id="CHEBI:29105"/>
    </ligand>
</feature>
<feature type="binding site" evidence="4">
    <location>
        <position position="204"/>
    </location>
    <ligand>
        <name>Zn(2+)</name>
        <dbReference type="ChEBI" id="CHEBI:29105"/>
    </ligand>
</feature>
<feature type="sequence conflict" description="In Ref. 1; CAA21935." evidence="6" ref="1">
    <original>I</original>
    <variation>V</variation>
    <location>
        <position position="86"/>
    </location>
</feature>
<feature type="sequence conflict" description="In Ref. 1; CAA21935." evidence="6" ref="1">
    <original>V</original>
    <variation>A</variation>
    <location>
        <position position="135"/>
    </location>
</feature>
<feature type="sequence conflict" description="In Ref. 1; CAA21935." evidence="6" ref="1">
    <original>S</original>
    <variation>A</variation>
    <location>
        <position position="266"/>
    </location>
</feature>
<keyword id="KW-0227">DNA damage</keyword>
<keyword id="KW-0234">DNA repair</keyword>
<keyword id="KW-0238">DNA-binding</keyword>
<keyword id="KW-0479">Metal-binding</keyword>
<keyword id="KW-0539">Nucleus</keyword>
<keyword id="KW-1185">Reference proteome</keyword>
<keyword id="KW-0808">Transferase</keyword>
<keyword id="KW-0833">Ubl conjugation pathway</keyword>
<keyword id="KW-0862">Zinc</keyword>
<keyword id="KW-0863">Zinc-finger</keyword>
<protein>
    <recommendedName>
        <fullName>Postreplication repair E3 ubiquitin-protein ligase RAD18</fullName>
        <ecNumber>2.3.2.27</ecNumber>
    </recommendedName>
    <alternativeName>
        <fullName evidence="6">RING-type E3 ubiquitin transferase RAD18</fullName>
    </alternativeName>
</protein>